<keyword id="KW-0028">Amino-acid biosynthesis</keyword>
<keyword id="KW-0055">Arginine biosynthesis</keyword>
<keyword id="KW-0963">Cytoplasm</keyword>
<keyword id="KW-0456">Lyase</keyword>
<name>ARLY_RHOPT</name>
<reference key="1">
    <citation type="submission" date="2008-05" db="EMBL/GenBank/DDBJ databases">
        <title>Complete sequence of Rhodopseudomonas palustris TIE-1.</title>
        <authorList>
            <consortium name="US DOE Joint Genome Institute"/>
            <person name="Lucas S."/>
            <person name="Copeland A."/>
            <person name="Lapidus A."/>
            <person name="Glavina del Rio T."/>
            <person name="Dalin E."/>
            <person name="Tice H."/>
            <person name="Pitluck S."/>
            <person name="Chain P."/>
            <person name="Malfatti S."/>
            <person name="Shin M."/>
            <person name="Vergez L."/>
            <person name="Lang D."/>
            <person name="Schmutz J."/>
            <person name="Larimer F."/>
            <person name="Land M."/>
            <person name="Hauser L."/>
            <person name="Kyrpides N."/>
            <person name="Mikhailova N."/>
            <person name="Emerson D."/>
            <person name="Newman D.K."/>
            <person name="Roden E."/>
            <person name="Richardson P."/>
        </authorList>
    </citation>
    <scope>NUCLEOTIDE SEQUENCE [LARGE SCALE GENOMIC DNA]</scope>
    <source>
        <strain>TIE-1</strain>
    </source>
</reference>
<sequence length="465" mass="50714">MSNKMWGGRFTDRPDAIMEEINVSIDVDRHLYAQDITASKAHAAMLAAQGIITANDAKNIGKGLDTILSEITAGKFTFKRALEDIHMNVESRLAELIGPAAGRLHTARSRNDQVATDFRLYVRDVLDETDAALAALQQALAERALEQADTVMPGFTHLQTAQPVTFGHHLMAYVEMVARDRGRFQDARKRLNESPLGAAALAGTSFPIDRHATAAKLGFDRPMANSLDAVSDRDFVLETLSAASICAVHLSRFAEEIVIWTSPLVGLIRLSDKFTTGSSIMPQKRNPDAAELVRAKTGRVIGALNGLLIVMKGLPLAYQKDMQEDKQGAMEGFAALSLAIRAITGMVRDLEPEPERMKLAAGEGYATATDLADWLVRTLKMPFREAHHVTGRIVGLAAKKGVALHELPLAEMQSVEKRITKDVLAVLSVESSVKSRTSYGGTAPKNVRSQAKAWLKRLAKDTKTR</sequence>
<evidence type="ECO:0000255" key="1">
    <source>
        <dbReference type="HAMAP-Rule" id="MF_00006"/>
    </source>
</evidence>
<protein>
    <recommendedName>
        <fullName evidence="1">Argininosuccinate lyase</fullName>
        <shortName evidence="1">ASAL</shortName>
        <ecNumber evidence="1">4.3.2.1</ecNumber>
    </recommendedName>
    <alternativeName>
        <fullName evidence="1">Arginosuccinase</fullName>
    </alternativeName>
</protein>
<accession>B3QCB2</accession>
<organism>
    <name type="scientific">Rhodopseudomonas palustris (strain TIE-1)</name>
    <dbReference type="NCBI Taxonomy" id="395960"/>
    <lineage>
        <taxon>Bacteria</taxon>
        <taxon>Pseudomonadati</taxon>
        <taxon>Pseudomonadota</taxon>
        <taxon>Alphaproteobacteria</taxon>
        <taxon>Hyphomicrobiales</taxon>
        <taxon>Nitrobacteraceae</taxon>
        <taxon>Rhodopseudomonas</taxon>
    </lineage>
</organism>
<comment type="catalytic activity">
    <reaction evidence="1">
        <text>2-(N(omega)-L-arginino)succinate = fumarate + L-arginine</text>
        <dbReference type="Rhea" id="RHEA:24020"/>
        <dbReference type="ChEBI" id="CHEBI:29806"/>
        <dbReference type="ChEBI" id="CHEBI:32682"/>
        <dbReference type="ChEBI" id="CHEBI:57472"/>
        <dbReference type="EC" id="4.3.2.1"/>
    </reaction>
</comment>
<comment type="pathway">
    <text evidence="1">Amino-acid biosynthesis; L-arginine biosynthesis; L-arginine from L-ornithine and carbamoyl phosphate: step 3/3.</text>
</comment>
<comment type="subcellular location">
    <subcellularLocation>
        <location evidence="1">Cytoplasm</location>
    </subcellularLocation>
</comment>
<comment type="similarity">
    <text evidence="1">Belongs to the lyase 1 family. Argininosuccinate lyase subfamily.</text>
</comment>
<proteinExistence type="inferred from homology"/>
<dbReference type="EC" id="4.3.2.1" evidence="1"/>
<dbReference type="EMBL" id="CP001096">
    <property type="protein sequence ID" value="ACF03713.1"/>
    <property type="molecule type" value="Genomic_DNA"/>
</dbReference>
<dbReference type="RefSeq" id="WP_011160275.1">
    <property type="nucleotide sequence ID" value="NC_011004.1"/>
</dbReference>
<dbReference type="SMR" id="B3QCB2"/>
<dbReference type="GeneID" id="66895902"/>
<dbReference type="KEGG" id="rpt:Rpal_5225"/>
<dbReference type="HOGENOM" id="CLU_027272_2_3_5"/>
<dbReference type="OrthoDB" id="9769623at2"/>
<dbReference type="UniPathway" id="UPA00068">
    <property type="reaction ID" value="UER00114"/>
</dbReference>
<dbReference type="Proteomes" id="UP000001725">
    <property type="component" value="Chromosome"/>
</dbReference>
<dbReference type="GO" id="GO:0005829">
    <property type="term" value="C:cytosol"/>
    <property type="evidence" value="ECO:0007669"/>
    <property type="project" value="TreeGrafter"/>
</dbReference>
<dbReference type="GO" id="GO:0004056">
    <property type="term" value="F:argininosuccinate lyase activity"/>
    <property type="evidence" value="ECO:0007669"/>
    <property type="project" value="UniProtKB-UniRule"/>
</dbReference>
<dbReference type="GO" id="GO:0042450">
    <property type="term" value="P:arginine biosynthetic process via ornithine"/>
    <property type="evidence" value="ECO:0007669"/>
    <property type="project" value="InterPro"/>
</dbReference>
<dbReference type="GO" id="GO:0006526">
    <property type="term" value="P:L-arginine biosynthetic process"/>
    <property type="evidence" value="ECO:0007669"/>
    <property type="project" value="UniProtKB-UniRule"/>
</dbReference>
<dbReference type="CDD" id="cd01359">
    <property type="entry name" value="Argininosuccinate_lyase"/>
    <property type="match status" value="1"/>
</dbReference>
<dbReference type="FunFam" id="1.10.275.10:FF:000002">
    <property type="entry name" value="Argininosuccinate lyase"/>
    <property type="match status" value="1"/>
</dbReference>
<dbReference type="FunFam" id="1.10.40.30:FF:000001">
    <property type="entry name" value="Argininosuccinate lyase"/>
    <property type="match status" value="1"/>
</dbReference>
<dbReference type="FunFam" id="1.20.200.10:FF:000015">
    <property type="entry name" value="argininosuccinate lyase isoform X2"/>
    <property type="match status" value="1"/>
</dbReference>
<dbReference type="Gene3D" id="1.10.40.30">
    <property type="entry name" value="Fumarase/aspartase (C-terminal domain)"/>
    <property type="match status" value="1"/>
</dbReference>
<dbReference type="Gene3D" id="1.20.200.10">
    <property type="entry name" value="Fumarase/aspartase (Central domain)"/>
    <property type="match status" value="1"/>
</dbReference>
<dbReference type="Gene3D" id="1.10.275.10">
    <property type="entry name" value="Fumarase/aspartase (N-terminal domain)"/>
    <property type="match status" value="1"/>
</dbReference>
<dbReference type="HAMAP" id="MF_00006">
    <property type="entry name" value="Arg_succ_lyase"/>
    <property type="match status" value="1"/>
</dbReference>
<dbReference type="InterPro" id="IPR029419">
    <property type="entry name" value="Arg_succ_lyase_C"/>
</dbReference>
<dbReference type="InterPro" id="IPR009049">
    <property type="entry name" value="Argininosuccinate_lyase"/>
</dbReference>
<dbReference type="InterPro" id="IPR024083">
    <property type="entry name" value="Fumarase/histidase_N"/>
</dbReference>
<dbReference type="InterPro" id="IPR020557">
    <property type="entry name" value="Fumarate_lyase_CS"/>
</dbReference>
<dbReference type="InterPro" id="IPR000362">
    <property type="entry name" value="Fumarate_lyase_fam"/>
</dbReference>
<dbReference type="InterPro" id="IPR022761">
    <property type="entry name" value="Fumarate_lyase_N"/>
</dbReference>
<dbReference type="InterPro" id="IPR008948">
    <property type="entry name" value="L-Aspartase-like"/>
</dbReference>
<dbReference type="NCBIfam" id="TIGR00838">
    <property type="entry name" value="argH"/>
    <property type="match status" value="1"/>
</dbReference>
<dbReference type="PANTHER" id="PTHR43814">
    <property type="entry name" value="ARGININOSUCCINATE LYASE"/>
    <property type="match status" value="1"/>
</dbReference>
<dbReference type="PANTHER" id="PTHR43814:SF1">
    <property type="entry name" value="ARGININOSUCCINATE LYASE"/>
    <property type="match status" value="1"/>
</dbReference>
<dbReference type="Pfam" id="PF14698">
    <property type="entry name" value="ASL_C2"/>
    <property type="match status" value="1"/>
</dbReference>
<dbReference type="Pfam" id="PF00206">
    <property type="entry name" value="Lyase_1"/>
    <property type="match status" value="1"/>
</dbReference>
<dbReference type="PRINTS" id="PR00145">
    <property type="entry name" value="ARGSUCLYASE"/>
</dbReference>
<dbReference type="PRINTS" id="PR00149">
    <property type="entry name" value="FUMRATELYASE"/>
</dbReference>
<dbReference type="SUPFAM" id="SSF48557">
    <property type="entry name" value="L-aspartase-like"/>
    <property type="match status" value="1"/>
</dbReference>
<dbReference type="PROSITE" id="PS00163">
    <property type="entry name" value="FUMARATE_LYASES"/>
    <property type="match status" value="1"/>
</dbReference>
<gene>
    <name evidence="1" type="primary">argH</name>
    <name type="ordered locus">Rpal_5225</name>
</gene>
<feature type="chain" id="PRO_1000089108" description="Argininosuccinate lyase">
    <location>
        <begin position="1"/>
        <end position="465"/>
    </location>
</feature>